<reference key="1">
    <citation type="journal article" date="2005" name="Nat. Biotechnol.">
        <title>The complete genome sequence of the meat-borne lactic acid bacterium Lactobacillus sakei 23K.</title>
        <authorList>
            <person name="Chaillou S."/>
            <person name="Champomier-Verges M.-C."/>
            <person name="Cornet M."/>
            <person name="Crutz-Le Coq A.-M."/>
            <person name="Dudez A.-M."/>
            <person name="Martin V."/>
            <person name="Beaufils S."/>
            <person name="Darbon-Rongere E."/>
            <person name="Bossy R."/>
            <person name="Loux V."/>
            <person name="Zagorec M."/>
        </authorList>
    </citation>
    <scope>NUCLEOTIDE SEQUENCE [LARGE SCALE GENOMIC DNA]</scope>
    <source>
        <strain>23K</strain>
    </source>
</reference>
<sequence>MKNEMNYYEISREEWRYFHGRGEKYTAITDDELQQVSGLNDRISLTDVSDIYVPLRHLLQMKYEQFRENQIKQSEFLEIKPHKTPFIIGIAGSVAVGKSTTARLLQLLLSRVYPDKTVQMITTDGFLYSTSELKQKGILDKKGFPESYDMPQLISFLNAVKNNVAPVKAPKYSHQIYDIIPDEFDIIDDPDILIVEGINVLQLPTTEQIYVSDFFDFSVYVDANPSLIEKWFLERFDLLLDLAKDDPTNYYYPYAISDRASAFKMARRVWRDIDLRNLNDYILPTRNRADLILHKTKHHLIDKVFLRKY</sequence>
<proteinExistence type="inferred from homology"/>
<comment type="catalytic activity">
    <reaction evidence="1">
        <text>(R)-pantothenate + ATP = (R)-4'-phosphopantothenate + ADP + H(+)</text>
        <dbReference type="Rhea" id="RHEA:16373"/>
        <dbReference type="ChEBI" id="CHEBI:10986"/>
        <dbReference type="ChEBI" id="CHEBI:15378"/>
        <dbReference type="ChEBI" id="CHEBI:29032"/>
        <dbReference type="ChEBI" id="CHEBI:30616"/>
        <dbReference type="ChEBI" id="CHEBI:456216"/>
        <dbReference type="EC" id="2.7.1.33"/>
    </reaction>
</comment>
<comment type="pathway">
    <text evidence="1">Cofactor biosynthesis; coenzyme A biosynthesis; CoA from (R)-pantothenate: step 1/5.</text>
</comment>
<comment type="subcellular location">
    <subcellularLocation>
        <location evidence="1">Cytoplasm</location>
    </subcellularLocation>
</comment>
<comment type="similarity">
    <text evidence="1">Belongs to the prokaryotic pantothenate kinase family.</text>
</comment>
<keyword id="KW-0067">ATP-binding</keyword>
<keyword id="KW-0173">Coenzyme A biosynthesis</keyword>
<keyword id="KW-0963">Cytoplasm</keyword>
<keyword id="KW-0418">Kinase</keyword>
<keyword id="KW-0547">Nucleotide-binding</keyword>
<keyword id="KW-1185">Reference proteome</keyword>
<keyword id="KW-0808">Transferase</keyword>
<gene>
    <name evidence="1" type="primary">coaA</name>
    <name type="ordered locus">LCA_0138</name>
</gene>
<evidence type="ECO:0000255" key="1">
    <source>
        <dbReference type="HAMAP-Rule" id="MF_00215"/>
    </source>
</evidence>
<protein>
    <recommendedName>
        <fullName evidence="1">Pantothenate kinase</fullName>
        <ecNumber evidence="1">2.7.1.33</ecNumber>
    </recommendedName>
    <alternativeName>
        <fullName evidence="1">Pantothenic acid kinase</fullName>
    </alternativeName>
</protein>
<dbReference type="EC" id="2.7.1.33" evidence="1"/>
<dbReference type="EMBL" id="CR936503">
    <property type="protein sequence ID" value="CAI54435.1"/>
    <property type="molecule type" value="Genomic_DNA"/>
</dbReference>
<dbReference type="RefSeq" id="WP_011373849.1">
    <property type="nucleotide sequence ID" value="NC_007576.1"/>
</dbReference>
<dbReference type="SMR" id="Q38ZE2"/>
<dbReference type="STRING" id="314315.LCA_0138"/>
<dbReference type="KEGG" id="lsa:LCA_0138"/>
<dbReference type="eggNOG" id="COG1072">
    <property type="taxonomic scope" value="Bacteria"/>
</dbReference>
<dbReference type="HOGENOM" id="CLU_053818_1_1_9"/>
<dbReference type="OrthoDB" id="1550976at2"/>
<dbReference type="UniPathway" id="UPA00241">
    <property type="reaction ID" value="UER00352"/>
</dbReference>
<dbReference type="Proteomes" id="UP000002707">
    <property type="component" value="Chromosome"/>
</dbReference>
<dbReference type="GO" id="GO:0005737">
    <property type="term" value="C:cytoplasm"/>
    <property type="evidence" value="ECO:0007669"/>
    <property type="project" value="UniProtKB-SubCell"/>
</dbReference>
<dbReference type="GO" id="GO:0005524">
    <property type="term" value="F:ATP binding"/>
    <property type="evidence" value="ECO:0007669"/>
    <property type="project" value="UniProtKB-UniRule"/>
</dbReference>
<dbReference type="GO" id="GO:0004594">
    <property type="term" value="F:pantothenate kinase activity"/>
    <property type="evidence" value="ECO:0007669"/>
    <property type="project" value="UniProtKB-UniRule"/>
</dbReference>
<dbReference type="GO" id="GO:0015937">
    <property type="term" value="P:coenzyme A biosynthetic process"/>
    <property type="evidence" value="ECO:0007669"/>
    <property type="project" value="UniProtKB-UniRule"/>
</dbReference>
<dbReference type="CDD" id="cd02025">
    <property type="entry name" value="PanK"/>
    <property type="match status" value="1"/>
</dbReference>
<dbReference type="Gene3D" id="3.40.50.300">
    <property type="entry name" value="P-loop containing nucleotide triphosphate hydrolases"/>
    <property type="match status" value="1"/>
</dbReference>
<dbReference type="HAMAP" id="MF_00215">
    <property type="entry name" value="Pantothen_kinase_1"/>
    <property type="match status" value="1"/>
</dbReference>
<dbReference type="InterPro" id="IPR027417">
    <property type="entry name" value="P-loop_NTPase"/>
</dbReference>
<dbReference type="InterPro" id="IPR004566">
    <property type="entry name" value="PanK"/>
</dbReference>
<dbReference type="InterPro" id="IPR006083">
    <property type="entry name" value="PRK/URK"/>
</dbReference>
<dbReference type="NCBIfam" id="TIGR00554">
    <property type="entry name" value="panK_bact"/>
    <property type="match status" value="1"/>
</dbReference>
<dbReference type="PANTHER" id="PTHR10285">
    <property type="entry name" value="URIDINE KINASE"/>
    <property type="match status" value="1"/>
</dbReference>
<dbReference type="Pfam" id="PF00485">
    <property type="entry name" value="PRK"/>
    <property type="match status" value="1"/>
</dbReference>
<dbReference type="PIRSF" id="PIRSF000545">
    <property type="entry name" value="Pantothenate_kin"/>
    <property type="match status" value="1"/>
</dbReference>
<dbReference type="SUPFAM" id="SSF52540">
    <property type="entry name" value="P-loop containing nucleoside triphosphate hydrolases"/>
    <property type="match status" value="1"/>
</dbReference>
<feature type="chain" id="PRO_1000043223" description="Pantothenate kinase">
    <location>
        <begin position="1"/>
        <end position="309"/>
    </location>
</feature>
<feature type="binding site" evidence="1">
    <location>
        <begin position="92"/>
        <end position="99"/>
    </location>
    <ligand>
        <name>ATP</name>
        <dbReference type="ChEBI" id="CHEBI:30616"/>
    </ligand>
</feature>
<accession>Q38ZE2</accession>
<name>COAA_LATSS</name>
<organism>
    <name type="scientific">Latilactobacillus sakei subsp. sakei (strain 23K)</name>
    <name type="common">Lactobacillus sakei subsp. sakei</name>
    <dbReference type="NCBI Taxonomy" id="314315"/>
    <lineage>
        <taxon>Bacteria</taxon>
        <taxon>Bacillati</taxon>
        <taxon>Bacillota</taxon>
        <taxon>Bacilli</taxon>
        <taxon>Lactobacillales</taxon>
        <taxon>Lactobacillaceae</taxon>
        <taxon>Latilactobacillus</taxon>
    </lineage>
</organism>